<protein>
    <recommendedName>
        <fullName>Protein F29A7.6</fullName>
    </recommendedName>
</protein>
<evidence type="ECO:0000256" key="1">
    <source>
        <dbReference type="SAM" id="MobiDB-lite"/>
    </source>
</evidence>
<evidence type="ECO:0000305" key="2"/>
<feature type="chain" id="PRO_0000122439" description="Protein F29A7.6">
    <location>
        <begin position="1"/>
        <end position="189"/>
    </location>
</feature>
<feature type="region of interest" description="Disordered" evidence="1">
    <location>
        <begin position="124"/>
        <end position="161"/>
    </location>
</feature>
<feature type="compositionally biased region" description="Basic and acidic residues" evidence="1">
    <location>
        <begin position="133"/>
        <end position="161"/>
    </location>
</feature>
<dbReference type="EMBL" id="FO081088">
    <property type="protein sequence ID" value="CCD69020.1"/>
    <property type="molecule type" value="Genomic_DNA"/>
</dbReference>
<dbReference type="EMBL" id="AF304124">
    <property type="protein sequence ID" value="AAG50237.1"/>
    <property type="molecule type" value="mRNA"/>
</dbReference>
<dbReference type="PIR" id="T31700">
    <property type="entry name" value="T31700"/>
</dbReference>
<dbReference type="RefSeq" id="NP_494349.1">
    <property type="nucleotide sequence ID" value="NM_061948.4"/>
</dbReference>
<dbReference type="FunCoup" id="O16207">
    <property type="interactions" value="2064"/>
</dbReference>
<dbReference type="STRING" id="6239.F29A7.6.1"/>
<dbReference type="PaxDb" id="6239-F29A7.6"/>
<dbReference type="PeptideAtlas" id="O16207"/>
<dbReference type="EnsemblMetazoa" id="F29A7.6.1">
    <property type="protein sequence ID" value="F29A7.6.1"/>
    <property type="gene ID" value="WBGene00017916"/>
</dbReference>
<dbReference type="GeneID" id="173618"/>
<dbReference type="KEGG" id="cel:CELE_F29A7.6"/>
<dbReference type="UCSC" id="F29A7.6">
    <property type="organism name" value="c. elegans"/>
</dbReference>
<dbReference type="AGR" id="WB:WBGene00017916"/>
<dbReference type="CTD" id="173618"/>
<dbReference type="WormBase" id="F29A7.6">
    <property type="protein sequence ID" value="CE09777"/>
    <property type="gene ID" value="WBGene00017916"/>
</dbReference>
<dbReference type="eggNOG" id="KOG4531">
    <property type="taxonomic scope" value="Eukaryota"/>
</dbReference>
<dbReference type="GeneTree" id="ENSGT00390000009212"/>
<dbReference type="HOGENOM" id="CLU_1442317_0_0_1"/>
<dbReference type="InParanoid" id="O16207"/>
<dbReference type="OMA" id="KLMKYYE"/>
<dbReference type="OrthoDB" id="5850324at2759"/>
<dbReference type="Reactome" id="R-CEL-6791226">
    <property type="pathway name" value="Major pathway of rRNA processing in the nucleolus and cytosol"/>
</dbReference>
<dbReference type="PRO" id="PR:O16207"/>
<dbReference type="Proteomes" id="UP000001940">
    <property type="component" value="Chromosome II"/>
</dbReference>
<dbReference type="Bgee" id="WBGene00017916">
    <property type="expression patterns" value="Expressed in embryo and 4 other cell types or tissues"/>
</dbReference>
<dbReference type="GO" id="GO:0000460">
    <property type="term" value="P:maturation of 5.8S rRNA"/>
    <property type="evidence" value="ECO:0000318"/>
    <property type="project" value="GO_Central"/>
</dbReference>
<dbReference type="InterPro" id="IPR019324">
    <property type="entry name" value="MPP6"/>
</dbReference>
<dbReference type="PANTHER" id="PTHR13582">
    <property type="entry name" value="M-PHASE PHOSPHOPROTEIN 6"/>
    <property type="match status" value="1"/>
</dbReference>
<dbReference type="PANTHER" id="PTHR13582:SF0">
    <property type="entry name" value="M-PHASE PHOSPHOPROTEIN 6"/>
    <property type="match status" value="1"/>
</dbReference>
<dbReference type="Pfam" id="PF10175">
    <property type="entry name" value="MPP6"/>
    <property type="match status" value="1"/>
</dbReference>
<reference key="1">
    <citation type="journal article" date="1998" name="Science">
        <title>Genome sequence of the nematode C. elegans: a platform for investigating biology.</title>
        <authorList>
            <consortium name="The C. elegans sequencing consortium"/>
        </authorList>
    </citation>
    <scope>NUCLEOTIDE SEQUENCE [LARGE SCALE GENOMIC DNA]</scope>
    <source>
        <strain>Bristol N2</strain>
    </source>
</reference>
<reference key="2">
    <citation type="submission" date="2000-09" db="EMBL/GenBank/DDBJ databases">
        <title>The Caenorhabditis elegans transcriptome project, a complementary view of the genome.</title>
        <authorList>
            <person name="Kohara Y."/>
            <person name="Shin-i T."/>
            <person name="Suzuki Y."/>
            <person name="Sugano S."/>
            <person name="Potdevin M."/>
            <person name="Thierry-Mieg Y."/>
            <person name="Thierry-Mieg D."/>
            <person name="Thierry-Mieg J."/>
        </authorList>
    </citation>
    <scope>NUCLEOTIDE SEQUENCE [LARGE SCALE MRNA]</scope>
    <source>
        <strain>Bristol N2</strain>
    </source>
</reference>
<sequence>MTASERVVVKELSSSLLDMKFMLKKKKQIETKAAKKKEAKLDQLITEKEAEATCSTEILKSSEPKLEICYDYAKLENLKFGRLSFGGFNKEVELLMEYYEKLQNGMLSDSDDDGMDVDDEEMAKSLGGQKLAALDKKSQSKRERRQQNERNEETTGGRRFNIKDIRKRFAADDVADAPERKFMKPAEDC</sequence>
<accession>O16207</accession>
<comment type="similarity">
    <text evidence="2">Belongs to the MPP6 family.</text>
</comment>
<proteinExistence type="evidence at transcript level"/>
<gene>
    <name type="ORF">F29A7.6</name>
</gene>
<name>YF26_CAEEL</name>
<organism>
    <name type="scientific">Caenorhabditis elegans</name>
    <dbReference type="NCBI Taxonomy" id="6239"/>
    <lineage>
        <taxon>Eukaryota</taxon>
        <taxon>Metazoa</taxon>
        <taxon>Ecdysozoa</taxon>
        <taxon>Nematoda</taxon>
        <taxon>Chromadorea</taxon>
        <taxon>Rhabditida</taxon>
        <taxon>Rhabditina</taxon>
        <taxon>Rhabditomorpha</taxon>
        <taxon>Rhabditoidea</taxon>
        <taxon>Rhabditidae</taxon>
        <taxon>Peloderinae</taxon>
        <taxon>Caenorhabditis</taxon>
    </lineage>
</organism>
<keyword id="KW-1185">Reference proteome</keyword>